<accession>Q1QNV1</accession>
<feature type="chain" id="PRO_0000387009" description="Ribosomal RNA small subunit methyltransferase H">
    <location>
        <begin position="1"/>
        <end position="332"/>
    </location>
</feature>
<feature type="region of interest" description="Disordered" evidence="2">
    <location>
        <begin position="284"/>
        <end position="332"/>
    </location>
</feature>
<feature type="binding site" evidence="1">
    <location>
        <begin position="36"/>
        <end position="38"/>
    </location>
    <ligand>
        <name>S-adenosyl-L-methionine</name>
        <dbReference type="ChEBI" id="CHEBI:59789"/>
    </ligand>
</feature>
<feature type="binding site" evidence="1">
    <location>
        <position position="54"/>
    </location>
    <ligand>
        <name>S-adenosyl-L-methionine</name>
        <dbReference type="ChEBI" id="CHEBI:59789"/>
    </ligand>
</feature>
<feature type="binding site" evidence="1">
    <location>
        <position position="81"/>
    </location>
    <ligand>
        <name>S-adenosyl-L-methionine</name>
        <dbReference type="ChEBI" id="CHEBI:59789"/>
    </ligand>
</feature>
<feature type="binding site" evidence="1">
    <location>
        <position position="102"/>
    </location>
    <ligand>
        <name>S-adenosyl-L-methionine</name>
        <dbReference type="ChEBI" id="CHEBI:59789"/>
    </ligand>
</feature>
<feature type="binding site" evidence="1">
    <location>
        <position position="109"/>
    </location>
    <ligand>
        <name>S-adenosyl-L-methionine</name>
        <dbReference type="ChEBI" id="CHEBI:59789"/>
    </ligand>
</feature>
<evidence type="ECO:0000255" key="1">
    <source>
        <dbReference type="HAMAP-Rule" id="MF_01007"/>
    </source>
</evidence>
<evidence type="ECO:0000256" key="2">
    <source>
        <dbReference type="SAM" id="MobiDB-lite"/>
    </source>
</evidence>
<evidence type="ECO:0000305" key="3"/>
<proteinExistence type="inferred from homology"/>
<protein>
    <recommendedName>
        <fullName evidence="1">Ribosomal RNA small subunit methyltransferase H</fullName>
        <ecNumber evidence="1">2.1.1.199</ecNumber>
    </recommendedName>
    <alternativeName>
        <fullName evidence="1">16S rRNA m(4)C1402 methyltransferase</fullName>
    </alternativeName>
    <alternativeName>
        <fullName evidence="1">rRNA (cytosine-N(4)-)-methyltransferase RsmH</fullName>
    </alternativeName>
</protein>
<keyword id="KW-0963">Cytoplasm</keyword>
<keyword id="KW-0489">Methyltransferase</keyword>
<keyword id="KW-1185">Reference proteome</keyword>
<keyword id="KW-0698">rRNA processing</keyword>
<keyword id="KW-0949">S-adenosyl-L-methionine</keyword>
<keyword id="KW-0808">Transferase</keyword>
<comment type="function">
    <text evidence="1">Specifically methylates the N4 position of cytidine in position 1402 (C1402) of 16S rRNA.</text>
</comment>
<comment type="catalytic activity">
    <reaction evidence="1">
        <text>cytidine(1402) in 16S rRNA + S-adenosyl-L-methionine = N(4)-methylcytidine(1402) in 16S rRNA + S-adenosyl-L-homocysteine + H(+)</text>
        <dbReference type="Rhea" id="RHEA:42928"/>
        <dbReference type="Rhea" id="RHEA-COMP:10286"/>
        <dbReference type="Rhea" id="RHEA-COMP:10287"/>
        <dbReference type="ChEBI" id="CHEBI:15378"/>
        <dbReference type="ChEBI" id="CHEBI:57856"/>
        <dbReference type="ChEBI" id="CHEBI:59789"/>
        <dbReference type="ChEBI" id="CHEBI:74506"/>
        <dbReference type="ChEBI" id="CHEBI:82748"/>
        <dbReference type="EC" id="2.1.1.199"/>
    </reaction>
</comment>
<comment type="subcellular location">
    <subcellularLocation>
        <location evidence="1">Cytoplasm</location>
    </subcellularLocation>
</comment>
<comment type="similarity">
    <text evidence="1">Belongs to the methyltransferase superfamily. RsmH family.</text>
</comment>
<comment type="sequence caution" evidence="3">
    <conflict type="erroneous initiation">
        <sequence resource="EMBL-CDS" id="ABE62096"/>
    </conflict>
</comment>
<gene>
    <name evidence="1" type="primary">rsmH</name>
    <name type="synonym">mraW</name>
    <name type="ordered locus">Nham_1271</name>
</gene>
<organism>
    <name type="scientific">Nitrobacter hamburgensis (strain DSM 10229 / NCIMB 13809 / X14)</name>
    <dbReference type="NCBI Taxonomy" id="323097"/>
    <lineage>
        <taxon>Bacteria</taxon>
        <taxon>Pseudomonadati</taxon>
        <taxon>Pseudomonadota</taxon>
        <taxon>Alphaproteobacteria</taxon>
        <taxon>Hyphomicrobiales</taxon>
        <taxon>Nitrobacteraceae</taxon>
        <taxon>Nitrobacter</taxon>
    </lineage>
</organism>
<name>RSMH_NITHX</name>
<reference key="1">
    <citation type="submission" date="2006-03" db="EMBL/GenBank/DDBJ databases">
        <title>Complete sequence of chromosome of Nitrobacter hamburgensis X14.</title>
        <authorList>
            <consortium name="US DOE Joint Genome Institute"/>
            <person name="Copeland A."/>
            <person name="Lucas S."/>
            <person name="Lapidus A."/>
            <person name="Barry K."/>
            <person name="Detter J.C."/>
            <person name="Glavina del Rio T."/>
            <person name="Hammon N."/>
            <person name="Israni S."/>
            <person name="Dalin E."/>
            <person name="Tice H."/>
            <person name="Pitluck S."/>
            <person name="Chain P."/>
            <person name="Malfatti S."/>
            <person name="Shin M."/>
            <person name="Vergez L."/>
            <person name="Schmutz J."/>
            <person name="Larimer F."/>
            <person name="Land M."/>
            <person name="Hauser L."/>
            <person name="Kyrpides N."/>
            <person name="Ivanova N."/>
            <person name="Ward B."/>
            <person name="Arp D."/>
            <person name="Klotz M."/>
            <person name="Stein L."/>
            <person name="O'Mullan G."/>
            <person name="Starkenburg S."/>
            <person name="Sayavedra L."/>
            <person name="Poret-Peterson A.T."/>
            <person name="Gentry M.E."/>
            <person name="Bruce D."/>
            <person name="Richardson P."/>
        </authorList>
    </citation>
    <scope>NUCLEOTIDE SEQUENCE [LARGE SCALE GENOMIC DNA]</scope>
    <source>
        <strain>DSM 10229 / NCIMB 13809 / X14</strain>
    </source>
</reference>
<dbReference type="EC" id="2.1.1.199" evidence="1"/>
<dbReference type="EMBL" id="CP000319">
    <property type="protein sequence ID" value="ABE62096.1"/>
    <property type="status" value="ALT_INIT"/>
    <property type="molecule type" value="Genomic_DNA"/>
</dbReference>
<dbReference type="RefSeq" id="WP_041358836.1">
    <property type="nucleotide sequence ID" value="NC_007964.1"/>
</dbReference>
<dbReference type="SMR" id="Q1QNV1"/>
<dbReference type="STRING" id="323097.Nham_1271"/>
<dbReference type="KEGG" id="nha:Nham_1271"/>
<dbReference type="eggNOG" id="COG0275">
    <property type="taxonomic scope" value="Bacteria"/>
</dbReference>
<dbReference type="HOGENOM" id="CLU_038422_1_0_5"/>
<dbReference type="OrthoDB" id="9806637at2"/>
<dbReference type="Proteomes" id="UP000001953">
    <property type="component" value="Chromosome"/>
</dbReference>
<dbReference type="GO" id="GO:0005737">
    <property type="term" value="C:cytoplasm"/>
    <property type="evidence" value="ECO:0007669"/>
    <property type="project" value="UniProtKB-SubCell"/>
</dbReference>
<dbReference type="GO" id="GO:0071424">
    <property type="term" value="F:rRNA (cytosine-N4-)-methyltransferase activity"/>
    <property type="evidence" value="ECO:0007669"/>
    <property type="project" value="UniProtKB-UniRule"/>
</dbReference>
<dbReference type="GO" id="GO:0070475">
    <property type="term" value="P:rRNA base methylation"/>
    <property type="evidence" value="ECO:0007669"/>
    <property type="project" value="UniProtKB-UniRule"/>
</dbReference>
<dbReference type="FunFam" id="1.10.150.170:FF:000003">
    <property type="entry name" value="Ribosomal RNA small subunit methyltransferase H"/>
    <property type="match status" value="1"/>
</dbReference>
<dbReference type="Gene3D" id="1.10.150.170">
    <property type="entry name" value="Putative methyltransferase TM0872, insert domain"/>
    <property type="match status" value="1"/>
</dbReference>
<dbReference type="Gene3D" id="3.40.50.150">
    <property type="entry name" value="Vaccinia Virus protein VP39"/>
    <property type="match status" value="1"/>
</dbReference>
<dbReference type="HAMAP" id="MF_01007">
    <property type="entry name" value="16SrRNA_methyltr_H"/>
    <property type="match status" value="1"/>
</dbReference>
<dbReference type="InterPro" id="IPR002903">
    <property type="entry name" value="RsmH"/>
</dbReference>
<dbReference type="InterPro" id="IPR023397">
    <property type="entry name" value="SAM-dep_MeTrfase_MraW_recog"/>
</dbReference>
<dbReference type="InterPro" id="IPR029063">
    <property type="entry name" value="SAM-dependent_MTases_sf"/>
</dbReference>
<dbReference type="NCBIfam" id="TIGR00006">
    <property type="entry name" value="16S rRNA (cytosine(1402)-N(4))-methyltransferase RsmH"/>
    <property type="match status" value="1"/>
</dbReference>
<dbReference type="PANTHER" id="PTHR11265:SF0">
    <property type="entry name" value="12S RRNA N4-METHYLCYTIDINE METHYLTRANSFERASE"/>
    <property type="match status" value="1"/>
</dbReference>
<dbReference type="PANTHER" id="PTHR11265">
    <property type="entry name" value="S-ADENOSYL-METHYLTRANSFERASE MRAW"/>
    <property type="match status" value="1"/>
</dbReference>
<dbReference type="Pfam" id="PF01795">
    <property type="entry name" value="Methyltransf_5"/>
    <property type="match status" value="1"/>
</dbReference>
<dbReference type="PIRSF" id="PIRSF004486">
    <property type="entry name" value="MraW"/>
    <property type="match status" value="1"/>
</dbReference>
<dbReference type="SUPFAM" id="SSF81799">
    <property type="entry name" value="Putative methyltransferase TM0872, insert domain"/>
    <property type="match status" value="1"/>
</dbReference>
<dbReference type="SUPFAM" id="SSF53335">
    <property type="entry name" value="S-adenosyl-L-methionine-dependent methyltransferases"/>
    <property type="match status" value="1"/>
</dbReference>
<sequence length="332" mass="35123">MTASPVRHVPVLGREAVAMLAPRAGGVYVDATFGAGGYSRAILAVADTRVIGIDRDRSAIAGGFALVEESGGRLTLVEDRFSNLAAVCAAEGADVVDGIVMDVGVSSMQLDEADRGFSFRLDGPLDMRMSGHGPTAADVVARASETDLANIIYIFGEERRSRAVARAIVAARRDAPVATTRALADIVSKVVRAKPHEIHPATRTFQALRIFVNEELDELIAALAAAERVLRPGGRLAVVSFHSLEDRIVKNFFALRGKTGGGSRHRPEIERAAPSFAILTRRPVTAGQEEVSANPRARSAKLRAAERTAAPATADDGESPGWPSLANVMRGG</sequence>